<evidence type="ECO:0000255" key="1">
    <source>
        <dbReference type="HAMAP-Rule" id="MF_00108"/>
    </source>
</evidence>
<proteinExistence type="inferred from homology"/>
<gene>
    <name evidence="1" type="primary">ispD</name>
    <name type="ordered locus">CLK_2951</name>
</gene>
<reference key="1">
    <citation type="journal article" date="2007" name="PLoS ONE">
        <title>Analysis of the neurotoxin complex genes in Clostridium botulinum A1-A4 and B1 strains: BoNT/A3, /Ba4 and /B1 clusters are located within plasmids.</title>
        <authorList>
            <person name="Smith T.J."/>
            <person name="Hill K.K."/>
            <person name="Foley B.T."/>
            <person name="Detter J.C."/>
            <person name="Munk A.C."/>
            <person name="Bruce D.C."/>
            <person name="Doggett N.A."/>
            <person name="Smith L.A."/>
            <person name="Marks J.D."/>
            <person name="Xie G."/>
            <person name="Brettin T.S."/>
        </authorList>
    </citation>
    <scope>NUCLEOTIDE SEQUENCE [LARGE SCALE GENOMIC DNA]</scope>
    <source>
        <strain>Loch Maree / Type A3</strain>
    </source>
</reference>
<keyword id="KW-0414">Isoprene biosynthesis</keyword>
<keyword id="KW-0548">Nucleotidyltransferase</keyword>
<keyword id="KW-0808">Transferase</keyword>
<protein>
    <recommendedName>
        <fullName evidence="1">2-C-methyl-D-erythritol 4-phosphate cytidylyltransferase</fullName>
        <ecNumber evidence="1">2.7.7.60</ecNumber>
    </recommendedName>
    <alternativeName>
        <fullName evidence="1">4-diphosphocytidyl-2C-methyl-D-erythritol synthase</fullName>
    </alternativeName>
    <alternativeName>
        <fullName evidence="1">MEP cytidylyltransferase</fullName>
        <shortName evidence="1">MCT</shortName>
    </alternativeName>
</protein>
<dbReference type="EC" id="2.7.7.60" evidence="1"/>
<dbReference type="EMBL" id="CP000962">
    <property type="protein sequence ID" value="ACA55946.1"/>
    <property type="molecule type" value="Genomic_DNA"/>
</dbReference>
<dbReference type="RefSeq" id="WP_012343863.1">
    <property type="nucleotide sequence ID" value="NC_010520.1"/>
</dbReference>
<dbReference type="SMR" id="B1KTA8"/>
<dbReference type="KEGG" id="cbl:CLK_2951"/>
<dbReference type="HOGENOM" id="CLU_061281_2_2_9"/>
<dbReference type="UniPathway" id="UPA00056">
    <property type="reaction ID" value="UER00093"/>
</dbReference>
<dbReference type="GO" id="GO:0050518">
    <property type="term" value="F:2-C-methyl-D-erythritol 4-phosphate cytidylyltransferase activity"/>
    <property type="evidence" value="ECO:0007669"/>
    <property type="project" value="UniProtKB-UniRule"/>
</dbReference>
<dbReference type="GO" id="GO:0019288">
    <property type="term" value="P:isopentenyl diphosphate biosynthetic process, methylerythritol 4-phosphate pathway"/>
    <property type="evidence" value="ECO:0007669"/>
    <property type="project" value="UniProtKB-UniRule"/>
</dbReference>
<dbReference type="CDD" id="cd02516">
    <property type="entry name" value="CDP-ME_synthetase"/>
    <property type="match status" value="1"/>
</dbReference>
<dbReference type="FunFam" id="3.90.550.10:FF:000003">
    <property type="entry name" value="2-C-methyl-D-erythritol 4-phosphate cytidylyltransferase"/>
    <property type="match status" value="1"/>
</dbReference>
<dbReference type="Gene3D" id="3.90.550.10">
    <property type="entry name" value="Spore Coat Polysaccharide Biosynthesis Protein SpsA, Chain A"/>
    <property type="match status" value="1"/>
</dbReference>
<dbReference type="HAMAP" id="MF_00108">
    <property type="entry name" value="IspD"/>
    <property type="match status" value="1"/>
</dbReference>
<dbReference type="InterPro" id="IPR001228">
    <property type="entry name" value="IspD"/>
</dbReference>
<dbReference type="InterPro" id="IPR034683">
    <property type="entry name" value="IspD/TarI"/>
</dbReference>
<dbReference type="InterPro" id="IPR050088">
    <property type="entry name" value="IspD/TarI_cytidylyltransf_bact"/>
</dbReference>
<dbReference type="InterPro" id="IPR018294">
    <property type="entry name" value="ISPD_synthase_CS"/>
</dbReference>
<dbReference type="InterPro" id="IPR029044">
    <property type="entry name" value="Nucleotide-diphossugar_trans"/>
</dbReference>
<dbReference type="NCBIfam" id="TIGR00453">
    <property type="entry name" value="ispD"/>
    <property type="match status" value="1"/>
</dbReference>
<dbReference type="NCBIfam" id="NF001183">
    <property type="entry name" value="PRK00155.1-3"/>
    <property type="match status" value="1"/>
</dbReference>
<dbReference type="PANTHER" id="PTHR32125">
    <property type="entry name" value="2-C-METHYL-D-ERYTHRITOL 4-PHOSPHATE CYTIDYLYLTRANSFERASE, CHLOROPLASTIC"/>
    <property type="match status" value="1"/>
</dbReference>
<dbReference type="PANTHER" id="PTHR32125:SF4">
    <property type="entry name" value="2-C-METHYL-D-ERYTHRITOL 4-PHOSPHATE CYTIDYLYLTRANSFERASE, CHLOROPLASTIC"/>
    <property type="match status" value="1"/>
</dbReference>
<dbReference type="Pfam" id="PF01128">
    <property type="entry name" value="IspD"/>
    <property type="match status" value="1"/>
</dbReference>
<dbReference type="SUPFAM" id="SSF53448">
    <property type="entry name" value="Nucleotide-diphospho-sugar transferases"/>
    <property type="match status" value="1"/>
</dbReference>
<dbReference type="PROSITE" id="PS01295">
    <property type="entry name" value="ISPD"/>
    <property type="match status" value="1"/>
</dbReference>
<organism>
    <name type="scientific">Clostridium botulinum (strain Loch Maree / Type A3)</name>
    <dbReference type="NCBI Taxonomy" id="498214"/>
    <lineage>
        <taxon>Bacteria</taxon>
        <taxon>Bacillati</taxon>
        <taxon>Bacillota</taxon>
        <taxon>Clostridia</taxon>
        <taxon>Eubacteriales</taxon>
        <taxon>Clostridiaceae</taxon>
        <taxon>Clostridium</taxon>
    </lineage>
</organism>
<sequence length="229" mass="25773">MSKNSVIIVAAGKGKRMNSSISKQFLQIKNKPILYYTLNKFSTHESIDEIVLVTLEDKIEVCSEIIDKYSINKVSKIVPGGKERQDSVYNGLKAVSKDCEVVLIHDAARPFVTSDIIENGIRYANQYGAAACGIIPKDTIKIKNEKGFAIDTPNREDLFIAQTPQCFNYNIILDCHEKLKKHNKKVTDDTMVLEDYGKSVYLYEGSYSNIKITTPEDLILGEQILEKLT</sequence>
<comment type="function">
    <text evidence="1">Catalyzes the formation of 4-diphosphocytidyl-2-C-methyl-D-erythritol from CTP and 2-C-methyl-D-erythritol 4-phosphate (MEP).</text>
</comment>
<comment type="catalytic activity">
    <reaction evidence="1">
        <text>2-C-methyl-D-erythritol 4-phosphate + CTP + H(+) = 4-CDP-2-C-methyl-D-erythritol + diphosphate</text>
        <dbReference type="Rhea" id="RHEA:13429"/>
        <dbReference type="ChEBI" id="CHEBI:15378"/>
        <dbReference type="ChEBI" id="CHEBI:33019"/>
        <dbReference type="ChEBI" id="CHEBI:37563"/>
        <dbReference type="ChEBI" id="CHEBI:57823"/>
        <dbReference type="ChEBI" id="CHEBI:58262"/>
        <dbReference type="EC" id="2.7.7.60"/>
    </reaction>
</comment>
<comment type="pathway">
    <text evidence="1">Isoprenoid biosynthesis; isopentenyl diphosphate biosynthesis via DXP pathway; isopentenyl diphosphate from 1-deoxy-D-xylulose 5-phosphate: step 2/6.</text>
</comment>
<comment type="similarity">
    <text evidence="1">Belongs to the IspD/TarI cytidylyltransferase family. IspD subfamily.</text>
</comment>
<feature type="chain" id="PRO_1000094323" description="2-C-methyl-D-erythritol 4-phosphate cytidylyltransferase">
    <location>
        <begin position="1"/>
        <end position="229"/>
    </location>
</feature>
<feature type="site" description="Transition state stabilizer" evidence="1">
    <location>
        <position position="16"/>
    </location>
</feature>
<feature type="site" description="Transition state stabilizer" evidence="1">
    <location>
        <position position="23"/>
    </location>
</feature>
<feature type="site" description="Positions MEP for the nucleophilic attack" evidence="1">
    <location>
        <position position="155"/>
    </location>
</feature>
<feature type="site" description="Positions MEP for the nucleophilic attack" evidence="1">
    <location>
        <position position="211"/>
    </location>
</feature>
<accession>B1KTA8</accession>
<name>ISPD_CLOBM</name>